<evidence type="ECO:0000250" key="1">
    <source>
        <dbReference type="UniProtKB" id="P68137"/>
    </source>
</evidence>
<evidence type="ECO:0000305" key="2"/>
<name>ACT_FUCVE</name>
<keyword id="KW-0067">ATP-binding</keyword>
<keyword id="KW-0963">Cytoplasm</keyword>
<keyword id="KW-0206">Cytoskeleton</keyword>
<keyword id="KW-0378">Hydrolase</keyword>
<keyword id="KW-0547">Nucleotide-binding</keyword>
<protein>
    <recommendedName>
        <fullName>Actin</fullName>
        <ecNumber evidence="1">3.6.4.-</ecNumber>
    </recommendedName>
</protein>
<proteinExistence type="evidence at transcript level"/>
<dbReference type="EC" id="3.6.4.-" evidence="1"/>
<dbReference type="EMBL" id="X98885">
    <property type="protein sequence ID" value="CAA67388.1"/>
    <property type="molecule type" value="mRNA"/>
</dbReference>
<dbReference type="SMR" id="Q39758"/>
<dbReference type="GO" id="GO:0005737">
    <property type="term" value="C:cytoplasm"/>
    <property type="evidence" value="ECO:0007669"/>
    <property type="project" value="UniProtKB-KW"/>
</dbReference>
<dbReference type="GO" id="GO:0005856">
    <property type="term" value="C:cytoskeleton"/>
    <property type="evidence" value="ECO:0007669"/>
    <property type="project" value="UniProtKB-SubCell"/>
</dbReference>
<dbReference type="GO" id="GO:0005524">
    <property type="term" value="F:ATP binding"/>
    <property type="evidence" value="ECO:0007669"/>
    <property type="project" value="UniProtKB-KW"/>
</dbReference>
<dbReference type="GO" id="GO:0016787">
    <property type="term" value="F:hydrolase activity"/>
    <property type="evidence" value="ECO:0007669"/>
    <property type="project" value="UniProtKB-KW"/>
</dbReference>
<dbReference type="CDD" id="cd10224">
    <property type="entry name" value="ASKHA_NBD_actin"/>
    <property type="match status" value="1"/>
</dbReference>
<dbReference type="FunFam" id="2.30.36.70:FF:000001">
    <property type="entry name" value="Actin, alpha skeletal muscle"/>
    <property type="match status" value="1"/>
</dbReference>
<dbReference type="FunFam" id="3.30.420.40:FF:000291">
    <property type="entry name" value="Actin, alpha skeletal muscle"/>
    <property type="match status" value="1"/>
</dbReference>
<dbReference type="FunFam" id="3.90.640.10:FF:000047">
    <property type="entry name" value="Actin, alpha skeletal muscle"/>
    <property type="match status" value="1"/>
</dbReference>
<dbReference type="FunFam" id="3.30.420.40:FF:000404">
    <property type="entry name" value="Major actin"/>
    <property type="match status" value="1"/>
</dbReference>
<dbReference type="FunFam" id="3.30.420.40:FF:000058">
    <property type="entry name" value="Putative actin-related protein 5"/>
    <property type="match status" value="1"/>
</dbReference>
<dbReference type="Gene3D" id="3.30.420.40">
    <property type="match status" value="2"/>
</dbReference>
<dbReference type="Gene3D" id="3.90.640.10">
    <property type="entry name" value="Actin, Chain A, domain 4"/>
    <property type="match status" value="1"/>
</dbReference>
<dbReference type="InterPro" id="IPR004000">
    <property type="entry name" value="Actin"/>
</dbReference>
<dbReference type="InterPro" id="IPR020902">
    <property type="entry name" value="Actin/actin-like_CS"/>
</dbReference>
<dbReference type="InterPro" id="IPR004001">
    <property type="entry name" value="Actin_CS"/>
</dbReference>
<dbReference type="InterPro" id="IPR043129">
    <property type="entry name" value="ATPase_NBD"/>
</dbReference>
<dbReference type="PANTHER" id="PTHR11937">
    <property type="entry name" value="ACTIN"/>
    <property type="match status" value="1"/>
</dbReference>
<dbReference type="Pfam" id="PF00022">
    <property type="entry name" value="Actin"/>
    <property type="match status" value="1"/>
</dbReference>
<dbReference type="PRINTS" id="PR00190">
    <property type="entry name" value="ACTIN"/>
</dbReference>
<dbReference type="SMART" id="SM00268">
    <property type="entry name" value="ACTIN"/>
    <property type="match status" value="1"/>
</dbReference>
<dbReference type="SUPFAM" id="SSF53067">
    <property type="entry name" value="Actin-like ATPase domain"/>
    <property type="match status" value="2"/>
</dbReference>
<dbReference type="PROSITE" id="PS00406">
    <property type="entry name" value="ACTINS_1"/>
    <property type="match status" value="1"/>
</dbReference>
<dbReference type="PROSITE" id="PS00432">
    <property type="entry name" value="ACTINS_2"/>
    <property type="match status" value="1"/>
</dbReference>
<dbReference type="PROSITE" id="PS01132">
    <property type="entry name" value="ACTINS_ACT_LIKE"/>
    <property type="match status" value="1"/>
</dbReference>
<sequence>MADEDVQALVVDNGSGMCKAGFARDDAPRAVFPSIVGRPKHPGIMVGMDQKDAYVGDEAQSKRGVLTLKYPIEHGIVTNWDDMEKIWHHTFYNELRVAPEEHPVLLTEAPLNPKANKERMTQIMFETFNVPAMYVNIQAVLSLYASGRTTGCVLDSGDGVSHTVPIYEGYALPHAINRLDLAGRDLTDNLMKVLTERGYSFTTTAEREIVRDIKEKLTYVALDFDQEMKTAAESSQLEKSYELPDGNVIVIGNERFRCPEVLFQPSFIGMESSGIHDCTFKTIMKCDVDIRKDLYGNIVLSGGTTMFPGIGERMTKELTALAPSTMKIKVVAPPERKYSVWIGGSILASLSTFQQMWISKAEYDESGPSIVHRKCF</sequence>
<feature type="chain" id="PRO_0000088942" description="Actin">
    <location>
        <begin position="1"/>
        <end position="376"/>
    </location>
</feature>
<accession>Q39758</accession>
<reference key="1">
    <citation type="submission" date="1996-06" db="EMBL/GenBank/DDBJ databases">
        <title>Adaptation of Fucus spp. to heavy metal exposure.</title>
        <authorList>
            <person name="Nicolaus B.H.H."/>
            <person name="Harwood J.L."/>
            <person name="Kille P."/>
        </authorList>
    </citation>
    <scope>NUCLEOTIDE SEQUENCE [MRNA]</scope>
    <source>
        <tissue>Frond tip</tissue>
    </source>
</reference>
<comment type="function">
    <text>Actins are highly conserved proteins that are involved in various types of cell motility and are ubiquitously expressed in all eukaryotic cells.</text>
</comment>
<comment type="function">
    <text>Essential component of cell cytoskeleton; plays an important role in cytoplasmic streaming, cell shape determination, cell division, organelle movement and extension growth.</text>
</comment>
<comment type="catalytic activity">
    <reaction evidence="1">
        <text>ATP + H2O = ADP + phosphate + H(+)</text>
        <dbReference type="Rhea" id="RHEA:13065"/>
        <dbReference type="ChEBI" id="CHEBI:15377"/>
        <dbReference type="ChEBI" id="CHEBI:15378"/>
        <dbReference type="ChEBI" id="CHEBI:30616"/>
        <dbReference type="ChEBI" id="CHEBI:43474"/>
        <dbReference type="ChEBI" id="CHEBI:456216"/>
    </reaction>
</comment>
<comment type="subcellular location">
    <subcellularLocation>
        <location>Cytoplasm</location>
        <location>Cytoskeleton</location>
    </subcellularLocation>
</comment>
<comment type="similarity">
    <text evidence="2">Belongs to the actin family.</text>
</comment>
<organism>
    <name type="scientific">Fucus vesiculosus</name>
    <name type="common">Bladder wrack</name>
    <dbReference type="NCBI Taxonomy" id="49266"/>
    <lineage>
        <taxon>Eukaryota</taxon>
        <taxon>Sar</taxon>
        <taxon>Stramenopiles</taxon>
        <taxon>Ochrophyta</taxon>
        <taxon>PX clade</taxon>
        <taxon>Phaeophyceae</taxon>
        <taxon>Fucales</taxon>
        <taxon>Fucaceae</taxon>
        <taxon>Fucus</taxon>
    </lineage>
</organism>